<feature type="chain" id="PRO_0000077452" description="Cell surface-binding protein OPG105">
    <location>
        <begin position="1"/>
        <end position="304"/>
    </location>
</feature>
<feature type="topological domain" description="Virion surface" evidence="3">
    <location>
        <begin position="1"/>
        <end position="275"/>
    </location>
</feature>
<feature type="transmembrane region" description="Helical" evidence="3">
    <location>
        <begin position="276"/>
        <end position="294"/>
    </location>
</feature>
<feature type="topological domain" description="Intravirion" evidence="3">
    <location>
        <begin position="295"/>
        <end position="304"/>
    </location>
</feature>
<feature type="domain" description="Alpha-carbonic anhydrase" evidence="4">
    <location>
        <begin position="1"/>
        <end position="235"/>
    </location>
</feature>
<feature type="disulfide bond" description="Interchain" evidence="1">
    <location>
        <position position="262"/>
    </location>
</feature>
<accession>P0DSY2</accession>
<accession>P33065</accession>
<dbReference type="EMBL" id="L22579">
    <property type="protein sequence ID" value="AAA60846.1"/>
    <property type="molecule type" value="Genomic_DNA"/>
</dbReference>
<dbReference type="PIR" id="H72162">
    <property type="entry name" value="H72162"/>
</dbReference>
<dbReference type="PIR" id="T28536">
    <property type="entry name" value="T28536"/>
</dbReference>
<dbReference type="SMR" id="P0DSY2"/>
<dbReference type="KEGG" id="vg:1486424"/>
<dbReference type="Proteomes" id="UP000119805">
    <property type="component" value="Segment"/>
</dbReference>
<dbReference type="GO" id="GO:0016020">
    <property type="term" value="C:membrane"/>
    <property type="evidence" value="ECO:0007669"/>
    <property type="project" value="UniProtKB-KW"/>
</dbReference>
<dbReference type="GO" id="GO:0019031">
    <property type="term" value="C:viral envelope"/>
    <property type="evidence" value="ECO:0007669"/>
    <property type="project" value="UniProtKB-KW"/>
</dbReference>
<dbReference type="GO" id="GO:0055036">
    <property type="term" value="C:virion membrane"/>
    <property type="evidence" value="ECO:0007669"/>
    <property type="project" value="UniProtKB-SubCell"/>
</dbReference>
<dbReference type="GO" id="GO:0004089">
    <property type="term" value="F:carbonate dehydratase activity"/>
    <property type="evidence" value="ECO:0007669"/>
    <property type="project" value="InterPro"/>
</dbReference>
<dbReference type="GO" id="GO:0008270">
    <property type="term" value="F:zinc ion binding"/>
    <property type="evidence" value="ECO:0007669"/>
    <property type="project" value="InterPro"/>
</dbReference>
<dbReference type="GO" id="GO:0046718">
    <property type="term" value="P:symbiont entry into host cell"/>
    <property type="evidence" value="ECO:0007669"/>
    <property type="project" value="UniProtKB-KW"/>
</dbReference>
<dbReference type="GO" id="GO:0019062">
    <property type="term" value="P:virion attachment to host cell"/>
    <property type="evidence" value="ECO:0007669"/>
    <property type="project" value="UniProtKB-KW"/>
</dbReference>
<dbReference type="Gene3D" id="3.10.200.10">
    <property type="entry name" value="Alpha carbonic anhydrase"/>
    <property type="match status" value="1"/>
</dbReference>
<dbReference type="InterPro" id="IPR001148">
    <property type="entry name" value="CA_dom"/>
</dbReference>
<dbReference type="InterPro" id="IPR036398">
    <property type="entry name" value="CA_dom_sf"/>
</dbReference>
<dbReference type="InterPro" id="IPR023561">
    <property type="entry name" value="Carbonic_anhydrase_a-class"/>
</dbReference>
<dbReference type="PANTHER" id="PTHR18952">
    <property type="entry name" value="CARBONIC ANHYDRASE"/>
    <property type="match status" value="1"/>
</dbReference>
<dbReference type="PANTHER" id="PTHR18952:SF124">
    <property type="entry name" value="CARBONIC ANHYDRASE 7"/>
    <property type="match status" value="1"/>
</dbReference>
<dbReference type="Pfam" id="PF00194">
    <property type="entry name" value="Carb_anhydrase"/>
    <property type="match status" value="1"/>
</dbReference>
<dbReference type="SMART" id="SM01057">
    <property type="entry name" value="Carb_anhydrase"/>
    <property type="match status" value="1"/>
</dbReference>
<dbReference type="SUPFAM" id="SSF51069">
    <property type="entry name" value="Carbonic anhydrase"/>
    <property type="match status" value="1"/>
</dbReference>
<dbReference type="PROSITE" id="PS51144">
    <property type="entry name" value="ALPHA_CA_2"/>
    <property type="match status" value="1"/>
</dbReference>
<organism>
    <name type="scientific">Variola virus</name>
    <dbReference type="NCBI Taxonomy" id="10255"/>
    <lineage>
        <taxon>Viruses</taxon>
        <taxon>Varidnaviria</taxon>
        <taxon>Bamfordvirae</taxon>
        <taxon>Nucleocytoviricota</taxon>
        <taxon>Pokkesviricetes</taxon>
        <taxon>Chitovirales</taxon>
        <taxon>Poxviridae</taxon>
        <taxon>Chordopoxvirinae</taxon>
        <taxon>Orthopoxvirus</taxon>
    </lineage>
</organism>
<name>CAHH_VARV</name>
<evidence type="ECO:0000250" key="1"/>
<evidence type="ECO:0000250" key="2">
    <source>
        <dbReference type="UniProtKB" id="P04195"/>
    </source>
</evidence>
<evidence type="ECO:0000255" key="3"/>
<evidence type="ECO:0000255" key="4">
    <source>
        <dbReference type="PROSITE-ProRule" id="PRU01134"/>
    </source>
</evidence>
<evidence type="ECO:0000305" key="5"/>
<keyword id="KW-1015">Disulfide bond</keyword>
<keyword id="KW-0945">Host-virus interaction</keyword>
<keyword id="KW-0426">Late protein</keyword>
<keyword id="KW-0472">Membrane</keyword>
<keyword id="KW-0812">Transmembrane</keyword>
<keyword id="KW-1133">Transmembrane helix</keyword>
<keyword id="KW-1161">Viral attachment to host cell</keyword>
<keyword id="KW-0261">Viral envelope protein</keyword>
<keyword id="KW-0946">Virion</keyword>
<keyword id="KW-1160">Virus entry into host cell</keyword>
<protein>
    <recommendedName>
        <fullName>Cell surface-binding protein OPG105</fullName>
    </recommendedName>
    <alternativeName>
        <fullName>Carbonic anhydrase homolog</fullName>
    </alternativeName>
</protein>
<gene>
    <name type="primary">OPG105</name>
    <name type="ORF">D8L</name>
</gene>
<reference key="1">
    <citation type="journal article" date="1993" name="Nature">
        <title>Potential virulence determinants in terminal regions of variola smallpox virus genome.</title>
        <authorList>
            <person name="Massung R.F."/>
            <person name="Esposito J.J."/>
            <person name="Liu L.I."/>
            <person name="Qi J."/>
            <person name="Utterback T.R."/>
            <person name="Knight J.C."/>
            <person name="Aubin L."/>
            <person name="Yuran T.E."/>
            <person name="Parsons J.M."/>
            <person name="Loparev V.N."/>
            <person name="Selivanov N.A."/>
            <person name="Cavallaro K.F."/>
            <person name="Kerlavage A.R."/>
            <person name="Mahy B.W.J."/>
            <person name="Venter J.C."/>
        </authorList>
    </citation>
    <scope>NUCLEOTIDE SEQUENCE [GENOMIC DNA]</scope>
    <source>
        <strain>Bangladesh-1975</strain>
    </source>
</reference>
<organismHost>
    <name type="scientific">Homo sapiens</name>
    <name type="common">Human</name>
    <dbReference type="NCBI Taxonomy" id="9606"/>
</organismHost>
<sequence length="304" mass="35401">MSQQLSPINIETKKAISNARLKPLNIHYNESKPTTIQNTGKLVRINFKGGYLSGGFLPNEYVLSSLHIYWGKEDDYGSNHLIDVYKYSGEINLVHWNKKKYSSYEEAKKHDDGLIIISIFLQVSDHKNVYFQKIVNQLDSIRTANTSAPFDSVFYLDNLLPSKLDYFKYLGTTINHSADAVWIIFPTPINIHSDQLSKFRTLLSLSNHEGKPHYITENYRNPYKLNDDTEVYYSGEIIRAATTSPARENYFMRWLSDLRETCFSYYQKYIEGNKTFAIIAIVFVYILTAILFLMSRRYSREKQN</sequence>
<proteinExistence type="evidence at transcript level"/>
<comment type="function">
    <text evidence="1">Binds to chondroitin sulfate on the cell surface to provide virion attachment to target cell.</text>
</comment>
<comment type="subunit">
    <text evidence="2">Homodimer; disulfide-linked.</text>
</comment>
<comment type="subcellular location">
    <subcellularLocation>
        <location evidence="2">Virion membrane</location>
    </subcellularLocation>
    <text evidence="2">Component of the mature virion (MV) membrane.</text>
</comment>
<comment type="induction">
    <text>Expressed in the late phase of the viral replicative cycle.</text>
</comment>
<comment type="PTM">
    <text evidence="2">Apparently non-glycosylated.</text>
</comment>
<comment type="similarity">
    <text evidence="5">Belongs to the alpha-carbonic anhydrase family.</text>
</comment>